<dbReference type="EC" id="6.3.5.2" evidence="1"/>
<dbReference type="EMBL" id="CP000746">
    <property type="protein sequence ID" value="ABR74266.1"/>
    <property type="molecule type" value="Genomic_DNA"/>
</dbReference>
<dbReference type="RefSeq" id="WP_012072644.1">
    <property type="nucleotide sequence ID" value="NC_009655.1"/>
</dbReference>
<dbReference type="SMR" id="A6VMR9"/>
<dbReference type="STRING" id="339671.Asuc_0896"/>
<dbReference type="MEROPS" id="C26.957"/>
<dbReference type="KEGG" id="asu:Asuc_0896"/>
<dbReference type="eggNOG" id="COG0518">
    <property type="taxonomic scope" value="Bacteria"/>
</dbReference>
<dbReference type="eggNOG" id="COG0519">
    <property type="taxonomic scope" value="Bacteria"/>
</dbReference>
<dbReference type="HOGENOM" id="CLU_014340_0_5_6"/>
<dbReference type="OrthoDB" id="9802219at2"/>
<dbReference type="UniPathway" id="UPA00189">
    <property type="reaction ID" value="UER00296"/>
</dbReference>
<dbReference type="Proteomes" id="UP000001114">
    <property type="component" value="Chromosome"/>
</dbReference>
<dbReference type="GO" id="GO:0005829">
    <property type="term" value="C:cytosol"/>
    <property type="evidence" value="ECO:0007669"/>
    <property type="project" value="TreeGrafter"/>
</dbReference>
<dbReference type="GO" id="GO:0005524">
    <property type="term" value="F:ATP binding"/>
    <property type="evidence" value="ECO:0007669"/>
    <property type="project" value="UniProtKB-UniRule"/>
</dbReference>
<dbReference type="GO" id="GO:0003921">
    <property type="term" value="F:GMP synthase activity"/>
    <property type="evidence" value="ECO:0007669"/>
    <property type="project" value="InterPro"/>
</dbReference>
<dbReference type="CDD" id="cd01742">
    <property type="entry name" value="GATase1_GMP_Synthase"/>
    <property type="match status" value="1"/>
</dbReference>
<dbReference type="CDD" id="cd01997">
    <property type="entry name" value="GMP_synthase_C"/>
    <property type="match status" value="1"/>
</dbReference>
<dbReference type="FunFam" id="3.30.300.10:FF:000002">
    <property type="entry name" value="GMP synthase [glutamine-hydrolyzing]"/>
    <property type="match status" value="1"/>
</dbReference>
<dbReference type="FunFam" id="3.40.50.620:FF:000001">
    <property type="entry name" value="GMP synthase [glutamine-hydrolyzing]"/>
    <property type="match status" value="1"/>
</dbReference>
<dbReference type="FunFam" id="3.40.50.880:FF:000001">
    <property type="entry name" value="GMP synthase [glutamine-hydrolyzing]"/>
    <property type="match status" value="1"/>
</dbReference>
<dbReference type="Gene3D" id="3.30.300.10">
    <property type="match status" value="1"/>
</dbReference>
<dbReference type="Gene3D" id="3.40.50.880">
    <property type="match status" value="1"/>
</dbReference>
<dbReference type="Gene3D" id="3.40.50.620">
    <property type="entry name" value="HUPs"/>
    <property type="match status" value="1"/>
</dbReference>
<dbReference type="HAMAP" id="MF_00344">
    <property type="entry name" value="GMP_synthase"/>
    <property type="match status" value="1"/>
</dbReference>
<dbReference type="InterPro" id="IPR029062">
    <property type="entry name" value="Class_I_gatase-like"/>
</dbReference>
<dbReference type="InterPro" id="IPR017926">
    <property type="entry name" value="GATASE"/>
</dbReference>
<dbReference type="InterPro" id="IPR001674">
    <property type="entry name" value="GMP_synth_C"/>
</dbReference>
<dbReference type="InterPro" id="IPR004739">
    <property type="entry name" value="GMP_synth_GATase"/>
</dbReference>
<dbReference type="InterPro" id="IPR022955">
    <property type="entry name" value="GMP_synthase"/>
</dbReference>
<dbReference type="InterPro" id="IPR025777">
    <property type="entry name" value="GMPS_ATP_PPase_dom"/>
</dbReference>
<dbReference type="InterPro" id="IPR022310">
    <property type="entry name" value="NAD/GMP_synthase"/>
</dbReference>
<dbReference type="InterPro" id="IPR014729">
    <property type="entry name" value="Rossmann-like_a/b/a_fold"/>
</dbReference>
<dbReference type="NCBIfam" id="TIGR00884">
    <property type="entry name" value="guaA_Cterm"/>
    <property type="match status" value="1"/>
</dbReference>
<dbReference type="NCBIfam" id="TIGR00888">
    <property type="entry name" value="guaA_Nterm"/>
    <property type="match status" value="1"/>
</dbReference>
<dbReference type="NCBIfam" id="NF000848">
    <property type="entry name" value="PRK00074.1"/>
    <property type="match status" value="1"/>
</dbReference>
<dbReference type="PANTHER" id="PTHR11922:SF2">
    <property type="entry name" value="GMP SYNTHASE [GLUTAMINE-HYDROLYZING]"/>
    <property type="match status" value="1"/>
</dbReference>
<dbReference type="PANTHER" id="PTHR11922">
    <property type="entry name" value="GMP SYNTHASE-RELATED"/>
    <property type="match status" value="1"/>
</dbReference>
<dbReference type="Pfam" id="PF00117">
    <property type="entry name" value="GATase"/>
    <property type="match status" value="1"/>
</dbReference>
<dbReference type="Pfam" id="PF00958">
    <property type="entry name" value="GMP_synt_C"/>
    <property type="match status" value="1"/>
</dbReference>
<dbReference type="Pfam" id="PF02540">
    <property type="entry name" value="NAD_synthase"/>
    <property type="match status" value="1"/>
</dbReference>
<dbReference type="PRINTS" id="PR00097">
    <property type="entry name" value="ANTSNTHASEII"/>
</dbReference>
<dbReference type="PRINTS" id="PR00099">
    <property type="entry name" value="CPSGATASE"/>
</dbReference>
<dbReference type="PRINTS" id="PR00096">
    <property type="entry name" value="GATASE"/>
</dbReference>
<dbReference type="SUPFAM" id="SSF52402">
    <property type="entry name" value="Adenine nucleotide alpha hydrolases-like"/>
    <property type="match status" value="1"/>
</dbReference>
<dbReference type="SUPFAM" id="SSF52317">
    <property type="entry name" value="Class I glutamine amidotransferase-like"/>
    <property type="match status" value="1"/>
</dbReference>
<dbReference type="SUPFAM" id="SSF54810">
    <property type="entry name" value="GMP synthetase C-terminal dimerisation domain"/>
    <property type="match status" value="1"/>
</dbReference>
<dbReference type="PROSITE" id="PS51273">
    <property type="entry name" value="GATASE_TYPE_1"/>
    <property type="match status" value="1"/>
</dbReference>
<dbReference type="PROSITE" id="PS51553">
    <property type="entry name" value="GMPS_ATP_PPASE"/>
    <property type="match status" value="1"/>
</dbReference>
<name>GUAA_ACTSZ</name>
<reference key="1">
    <citation type="journal article" date="2010" name="BMC Genomics">
        <title>A genomic perspective on the potential of Actinobacillus succinogenes for industrial succinate production.</title>
        <authorList>
            <person name="McKinlay J.B."/>
            <person name="Laivenieks M."/>
            <person name="Schindler B.D."/>
            <person name="McKinlay A.A."/>
            <person name="Siddaramappa S."/>
            <person name="Challacombe J.F."/>
            <person name="Lowry S.R."/>
            <person name="Clum A."/>
            <person name="Lapidus A.L."/>
            <person name="Burkhart K.B."/>
            <person name="Harkins V."/>
            <person name="Vieille C."/>
        </authorList>
    </citation>
    <scope>NUCLEOTIDE SEQUENCE [LARGE SCALE GENOMIC DNA]</scope>
    <source>
        <strain>ATCC 55618 / DSM 22257 / CCUG 43843 / 130Z</strain>
    </source>
</reference>
<organism>
    <name type="scientific">Actinobacillus succinogenes (strain ATCC 55618 / DSM 22257 / CCUG 43843 / 130Z)</name>
    <dbReference type="NCBI Taxonomy" id="339671"/>
    <lineage>
        <taxon>Bacteria</taxon>
        <taxon>Pseudomonadati</taxon>
        <taxon>Pseudomonadota</taxon>
        <taxon>Gammaproteobacteria</taxon>
        <taxon>Pasteurellales</taxon>
        <taxon>Pasteurellaceae</taxon>
        <taxon>Actinobacillus</taxon>
    </lineage>
</organism>
<evidence type="ECO:0000255" key="1">
    <source>
        <dbReference type="HAMAP-Rule" id="MF_00344"/>
    </source>
</evidence>
<accession>A6VMR9</accession>
<sequence>MDNIHNHKILILDFGSQYTQLIARRVREIGVYCELWAWDVTEQQIREFNPTGIILSGGPESTTENDSPRAPEYVFDAGVPVLGVCYGMQTMAMQLGGLTEGSAHREFGYAQVDLQATDSLFAQLNDDLDSAQPKLDVWMSHGDKVTRLPEGFQVTGTTPTCPIAAMSDEKRHFYGVQFHPEVTHTKSGLALLTNFVVNICGCATNWTPENIIEDAVARIKAQVGDDEVILGLSGGVDSSVTALLLHRAIGKNLHCVFVDNGLLRLNEGDQVMEMFGDKFGLNIIRVNAEERFLDALKGIHDPEAKRKMIGKVFVDVFDEESHKQTSVKWLAQGTIYPDVIESAASKTGKAHVIKSHHNVGGLPDYMKLGLVEPLRELFKDEVRKIGLALGLPAEMLNRHPFPGPGLGVRVLGEIKKEYCDLLRKADAIFIEELYNSGWYYKVSQAFTVFLPVKSVGVMGDGRKYDWVVSLRAVETIDFMTAHWAQLPYDLLGKISNRIINEVDGISRVVYDVSGKPPATIEWE</sequence>
<comment type="function">
    <text evidence="1">Catalyzes the synthesis of GMP from XMP.</text>
</comment>
<comment type="catalytic activity">
    <reaction evidence="1">
        <text>XMP + L-glutamine + ATP + H2O = GMP + L-glutamate + AMP + diphosphate + 2 H(+)</text>
        <dbReference type="Rhea" id="RHEA:11680"/>
        <dbReference type="ChEBI" id="CHEBI:15377"/>
        <dbReference type="ChEBI" id="CHEBI:15378"/>
        <dbReference type="ChEBI" id="CHEBI:29985"/>
        <dbReference type="ChEBI" id="CHEBI:30616"/>
        <dbReference type="ChEBI" id="CHEBI:33019"/>
        <dbReference type="ChEBI" id="CHEBI:57464"/>
        <dbReference type="ChEBI" id="CHEBI:58115"/>
        <dbReference type="ChEBI" id="CHEBI:58359"/>
        <dbReference type="ChEBI" id="CHEBI:456215"/>
        <dbReference type="EC" id="6.3.5.2"/>
    </reaction>
</comment>
<comment type="pathway">
    <text evidence="1">Purine metabolism; GMP biosynthesis; GMP from XMP (L-Gln route): step 1/1.</text>
</comment>
<comment type="subunit">
    <text evidence="1">Homodimer.</text>
</comment>
<gene>
    <name evidence="1" type="primary">guaA</name>
    <name type="ordered locus">Asuc_0896</name>
</gene>
<proteinExistence type="inferred from homology"/>
<keyword id="KW-0067">ATP-binding</keyword>
<keyword id="KW-0315">Glutamine amidotransferase</keyword>
<keyword id="KW-0332">GMP biosynthesis</keyword>
<keyword id="KW-0436">Ligase</keyword>
<keyword id="KW-0547">Nucleotide-binding</keyword>
<keyword id="KW-0658">Purine biosynthesis</keyword>
<keyword id="KW-1185">Reference proteome</keyword>
<protein>
    <recommendedName>
        <fullName evidence="1">GMP synthase [glutamine-hydrolyzing]</fullName>
        <ecNumber evidence="1">6.3.5.2</ecNumber>
    </recommendedName>
    <alternativeName>
        <fullName evidence="1">GMP synthetase</fullName>
    </alternativeName>
    <alternativeName>
        <fullName evidence="1">Glutamine amidotransferase</fullName>
    </alternativeName>
</protein>
<feature type="chain" id="PRO_1000120202" description="GMP synthase [glutamine-hydrolyzing]">
    <location>
        <begin position="1"/>
        <end position="523"/>
    </location>
</feature>
<feature type="domain" description="Glutamine amidotransferase type-1" evidence="1">
    <location>
        <begin position="8"/>
        <end position="205"/>
    </location>
</feature>
<feature type="domain" description="GMPS ATP-PPase" evidence="1">
    <location>
        <begin position="206"/>
        <end position="398"/>
    </location>
</feature>
<feature type="active site" description="Nucleophile" evidence="1">
    <location>
        <position position="85"/>
    </location>
</feature>
<feature type="active site" evidence="1">
    <location>
        <position position="179"/>
    </location>
</feature>
<feature type="active site" evidence="1">
    <location>
        <position position="181"/>
    </location>
</feature>
<feature type="binding site" evidence="1">
    <location>
        <begin position="233"/>
        <end position="239"/>
    </location>
    <ligand>
        <name>ATP</name>
        <dbReference type="ChEBI" id="CHEBI:30616"/>
    </ligand>
</feature>